<protein>
    <recommendedName>
        <fullName>Phytanoyl-CoA hydroxylase-interacting protein</fullName>
    </recommendedName>
    <alternativeName>
        <fullName>Phytanoyl-CoA hydroxylase-associated protein 1</fullName>
        <shortName>PAHX-AP1</shortName>
        <shortName>PAHXAP1</shortName>
    </alternativeName>
</protein>
<reference key="1">
    <citation type="journal article" date="1996" name="DNA Res.">
        <title>Prediction of the coding sequences of unidentified human genes. VI. The coding sequences of 80 new genes (KIAA0201-KIAA0280) deduced by analysis of cDNA clones from cell line KG-1 and brain.</title>
        <authorList>
            <person name="Nagase T."/>
            <person name="Seki N."/>
            <person name="Ishikawa K."/>
            <person name="Ohira M."/>
            <person name="Kawarabayasi Y."/>
            <person name="Ohara O."/>
            <person name="Tanaka A."/>
            <person name="Kotani H."/>
            <person name="Miyajima N."/>
            <person name="Nomura N."/>
        </authorList>
    </citation>
    <scope>NUCLEOTIDE SEQUENCE [LARGE SCALE MRNA]</scope>
    <source>
        <tissue>Bone marrow</tissue>
    </source>
</reference>
<reference key="2">
    <citation type="submission" date="2005-09" db="EMBL/GenBank/DDBJ databases">
        <authorList>
            <person name="Mural R.J."/>
            <person name="Istrail S."/>
            <person name="Sutton G.G."/>
            <person name="Florea L."/>
            <person name="Halpern A.L."/>
            <person name="Mobarry C.M."/>
            <person name="Lippert R."/>
            <person name="Walenz B."/>
            <person name="Shatkay H."/>
            <person name="Dew I."/>
            <person name="Miller J.R."/>
            <person name="Flanigan M.J."/>
            <person name="Edwards N.J."/>
            <person name="Bolanos R."/>
            <person name="Fasulo D."/>
            <person name="Halldorsson B.V."/>
            <person name="Hannenhalli S."/>
            <person name="Turner R."/>
            <person name="Yooseph S."/>
            <person name="Lu F."/>
            <person name="Nusskern D.R."/>
            <person name="Shue B.C."/>
            <person name="Zheng X.H."/>
            <person name="Zhong F."/>
            <person name="Delcher A.L."/>
            <person name="Huson D.H."/>
            <person name="Kravitz S.A."/>
            <person name="Mouchard L."/>
            <person name="Reinert K."/>
            <person name="Remington K.A."/>
            <person name="Clark A.G."/>
            <person name="Waterman M.S."/>
            <person name="Eichler E.E."/>
            <person name="Adams M.D."/>
            <person name="Hunkapiller M.W."/>
            <person name="Myers E.W."/>
            <person name="Venter J.C."/>
        </authorList>
    </citation>
    <scope>NUCLEOTIDE SEQUENCE [LARGE SCALE GENOMIC DNA]</scope>
</reference>
<reference key="3">
    <citation type="journal article" date="2004" name="Genome Res.">
        <title>The status, quality, and expansion of the NIH full-length cDNA project: the Mammalian Gene Collection (MGC).</title>
        <authorList>
            <consortium name="The MGC Project Team"/>
        </authorList>
    </citation>
    <scope>NUCLEOTIDE SEQUENCE [LARGE SCALE MRNA]</scope>
    <source>
        <tissue>Brain</tissue>
    </source>
</reference>
<reference key="4">
    <citation type="journal article" date="2000" name="Brain Res. Mol. Brain Res.">
        <title>Identification of a brain specific protein that associates with a Refsum disease gene product, phytanoyl-CoA alpha-hydroxylase.</title>
        <authorList>
            <person name="Lee Z.H."/>
            <person name="Kim H.-H."/>
            <person name="Ahn K.Y."/>
            <person name="Seo K.H."/>
            <person name="Kim J.K."/>
            <person name="Bae C.S."/>
            <person name="Kim K.K."/>
        </authorList>
    </citation>
    <scope>TISSUE SPECIFICITY</scope>
    <scope>INTERACTION WITH PHYH</scope>
</reference>
<dbReference type="EMBL" id="D87463">
    <property type="protein sequence ID" value="BAA13402.2"/>
    <property type="status" value="ALT_INIT"/>
    <property type="molecule type" value="mRNA"/>
</dbReference>
<dbReference type="EMBL" id="CH471080">
    <property type="protein sequence ID" value="EAW63693.1"/>
    <property type="molecule type" value="Genomic_DNA"/>
</dbReference>
<dbReference type="EMBL" id="CH471080">
    <property type="protein sequence ID" value="EAW63694.1"/>
    <property type="molecule type" value="Genomic_DNA"/>
</dbReference>
<dbReference type="EMBL" id="BC034034">
    <property type="protein sequence ID" value="AAH34034.1"/>
    <property type="molecule type" value="mRNA"/>
</dbReference>
<dbReference type="EMBL" id="BC035940">
    <property type="protein sequence ID" value="AAH35940.1"/>
    <property type="molecule type" value="mRNA"/>
</dbReference>
<dbReference type="CCDS" id="CCDS43723.1"/>
<dbReference type="RefSeq" id="NP_001092805.1">
    <property type="nucleotide sequence ID" value="NM_001099335.2"/>
</dbReference>
<dbReference type="RefSeq" id="NP_001350240.1">
    <property type="nucleotide sequence ID" value="NM_001363311.2"/>
</dbReference>
<dbReference type="RefSeq" id="NP_001350241.1">
    <property type="nucleotide sequence ID" value="NM_001363312.2"/>
</dbReference>
<dbReference type="RefSeq" id="NP_055574.3">
    <property type="nucleotide sequence ID" value="NM_014759.3"/>
</dbReference>
<dbReference type="RefSeq" id="XP_006716479.1">
    <property type="nucleotide sequence ID" value="XM_006716416.1"/>
</dbReference>
<dbReference type="SMR" id="Q92561"/>
<dbReference type="BioGRID" id="115139">
    <property type="interactions" value="43"/>
</dbReference>
<dbReference type="FunCoup" id="Q92561">
    <property type="interactions" value="412"/>
</dbReference>
<dbReference type="IntAct" id="Q92561">
    <property type="interactions" value="39"/>
</dbReference>
<dbReference type="STRING" id="9606.ENSP00000320017"/>
<dbReference type="GlyCosmos" id="Q92561">
    <property type="glycosylation" value="2 sites, No reported glycans"/>
</dbReference>
<dbReference type="GlyGen" id="Q92561">
    <property type="glycosylation" value="3 sites, 1 O-linked glycan (1 site)"/>
</dbReference>
<dbReference type="iPTMnet" id="Q92561"/>
<dbReference type="PhosphoSitePlus" id="Q92561"/>
<dbReference type="SwissPalm" id="Q92561"/>
<dbReference type="BioMuta" id="PHYHIP"/>
<dbReference type="DMDM" id="2495731"/>
<dbReference type="jPOST" id="Q92561"/>
<dbReference type="MassIVE" id="Q92561"/>
<dbReference type="PaxDb" id="9606-ENSP00000415491"/>
<dbReference type="PeptideAtlas" id="Q92561"/>
<dbReference type="ProteomicsDB" id="75317"/>
<dbReference type="Antibodypedia" id="5280">
    <property type="antibodies" value="106 antibodies from 22 providers"/>
</dbReference>
<dbReference type="DNASU" id="9796"/>
<dbReference type="Ensembl" id="ENST00000321613.7">
    <property type="protein sequence ID" value="ENSP00000320017.3"/>
    <property type="gene ID" value="ENSG00000168490.14"/>
</dbReference>
<dbReference type="Ensembl" id="ENST00000454243.7">
    <property type="protein sequence ID" value="ENSP00000415491.2"/>
    <property type="gene ID" value="ENSG00000168490.14"/>
</dbReference>
<dbReference type="GeneID" id="9796"/>
<dbReference type="KEGG" id="hsa:9796"/>
<dbReference type="MANE-Select" id="ENST00000454243.7">
    <property type="protein sequence ID" value="ENSP00000415491.2"/>
    <property type="RefSeq nucleotide sequence ID" value="NM_014759.5"/>
    <property type="RefSeq protein sequence ID" value="NP_055574.3"/>
</dbReference>
<dbReference type="UCSC" id="uc003xbj.5">
    <property type="organism name" value="human"/>
</dbReference>
<dbReference type="AGR" id="HGNC:16865"/>
<dbReference type="CTD" id="9796"/>
<dbReference type="DisGeNET" id="9796"/>
<dbReference type="GeneCards" id="PHYHIP"/>
<dbReference type="HGNC" id="HGNC:16865">
    <property type="gene designation" value="PHYHIP"/>
</dbReference>
<dbReference type="HPA" id="ENSG00000168490">
    <property type="expression patterns" value="Tissue enriched (brain)"/>
</dbReference>
<dbReference type="MIM" id="608511">
    <property type="type" value="gene"/>
</dbReference>
<dbReference type="neXtProt" id="NX_Q92561"/>
<dbReference type="OpenTargets" id="ENSG00000168490"/>
<dbReference type="PharmGKB" id="PA33281"/>
<dbReference type="VEuPathDB" id="HostDB:ENSG00000168490"/>
<dbReference type="eggNOG" id="ENOG502QQIT">
    <property type="taxonomic scope" value="Eukaryota"/>
</dbReference>
<dbReference type="GeneTree" id="ENSGT00390000014563"/>
<dbReference type="HOGENOM" id="CLU_054218_1_0_1"/>
<dbReference type="InParanoid" id="Q92561"/>
<dbReference type="OMA" id="SPGDHFC"/>
<dbReference type="OrthoDB" id="6101761at2759"/>
<dbReference type="PAN-GO" id="Q92561">
    <property type="GO annotations" value="1 GO annotation based on evolutionary models"/>
</dbReference>
<dbReference type="PhylomeDB" id="Q92561"/>
<dbReference type="TreeFam" id="TF314485"/>
<dbReference type="PathwayCommons" id="Q92561"/>
<dbReference type="SignaLink" id="Q92561"/>
<dbReference type="BioGRID-ORCS" id="9796">
    <property type="hits" value="15 hits in 1155 CRISPR screens"/>
</dbReference>
<dbReference type="CD-CODE" id="FB4E32DD">
    <property type="entry name" value="Presynaptic clusters and postsynaptic densities"/>
</dbReference>
<dbReference type="ChiTaRS" id="PHYHIP">
    <property type="organism name" value="human"/>
</dbReference>
<dbReference type="GenomeRNAi" id="9796"/>
<dbReference type="Pharos" id="Q92561">
    <property type="development level" value="Tdark"/>
</dbReference>
<dbReference type="PRO" id="PR:Q92561"/>
<dbReference type="Proteomes" id="UP000005640">
    <property type="component" value="Chromosome 8"/>
</dbReference>
<dbReference type="RNAct" id="Q92561">
    <property type="molecule type" value="protein"/>
</dbReference>
<dbReference type="Bgee" id="ENSG00000168490">
    <property type="expression patterns" value="Expressed in right hemisphere of cerebellum and 132 other cell types or tissues"/>
</dbReference>
<dbReference type="ExpressionAtlas" id="Q92561">
    <property type="expression patterns" value="baseline and differential"/>
</dbReference>
<dbReference type="GO" id="GO:0005737">
    <property type="term" value="C:cytoplasm"/>
    <property type="evidence" value="ECO:0000314"/>
    <property type="project" value="UniProtKB"/>
</dbReference>
<dbReference type="GO" id="GO:1990782">
    <property type="term" value="F:protein tyrosine kinase binding"/>
    <property type="evidence" value="ECO:0000353"/>
    <property type="project" value="UniProtKB"/>
</dbReference>
<dbReference type="GO" id="GO:0008104">
    <property type="term" value="P:protein localization"/>
    <property type="evidence" value="ECO:0000314"/>
    <property type="project" value="UniProtKB"/>
</dbReference>
<dbReference type="CDD" id="cd00063">
    <property type="entry name" value="FN3"/>
    <property type="match status" value="1"/>
</dbReference>
<dbReference type="FunFam" id="2.60.40.10:FF:000277">
    <property type="entry name" value="Phytanoyl-CoA hydroxylase-interacting protein-like protein"/>
    <property type="match status" value="1"/>
</dbReference>
<dbReference type="Gene3D" id="2.60.40.10">
    <property type="entry name" value="Immunoglobulins"/>
    <property type="match status" value="1"/>
</dbReference>
<dbReference type="InterPro" id="IPR003961">
    <property type="entry name" value="FN3_dom"/>
</dbReference>
<dbReference type="InterPro" id="IPR036116">
    <property type="entry name" value="FN3_sf"/>
</dbReference>
<dbReference type="InterPro" id="IPR013783">
    <property type="entry name" value="Ig-like_fold"/>
</dbReference>
<dbReference type="InterPro" id="IPR042868">
    <property type="entry name" value="PHYHIP/PHYHIPL"/>
</dbReference>
<dbReference type="InterPro" id="IPR045545">
    <property type="entry name" value="PHYIP/PHIPL_C"/>
</dbReference>
<dbReference type="PANTHER" id="PTHR15698:SF9">
    <property type="entry name" value="PHYTANOYL-COA HYDROXYLASE-INTERACTING PROTEIN"/>
    <property type="match status" value="1"/>
</dbReference>
<dbReference type="PANTHER" id="PTHR15698">
    <property type="entry name" value="PROTEIN CBG15099"/>
    <property type="match status" value="1"/>
</dbReference>
<dbReference type="Pfam" id="PF19281">
    <property type="entry name" value="PHYHIP_C"/>
    <property type="match status" value="1"/>
</dbReference>
<dbReference type="SUPFAM" id="SSF49265">
    <property type="entry name" value="Fibronectin type III"/>
    <property type="match status" value="1"/>
</dbReference>
<dbReference type="PROSITE" id="PS50853">
    <property type="entry name" value="FN3"/>
    <property type="match status" value="1"/>
</dbReference>
<comment type="function">
    <text>Its interaction with PHYH suggests a role in the development of the central system.</text>
</comment>
<comment type="subunit">
    <text evidence="3">Interacts with PHYH and ADGRB1.</text>
</comment>
<comment type="interaction">
    <interactant intactId="EBI-716478">
        <id>Q92561</id>
    </interactant>
    <interactant intactId="EBI-10316423">
        <id>Q9NXK6</id>
        <label>PAQR5</label>
    </interactant>
    <organismsDiffer>false</organismsDiffer>
    <experiments>2</experiments>
</comment>
<comment type="tissue specificity">
    <text evidence="3">Highly expressed in the brain.</text>
</comment>
<comment type="similarity">
    <text evidence="4">Belongs to the PHYHIP family.</text>
</comment>
<comment type="sequence caution" evidence="4">
    <conflict type="erroneous initiation">
        <sequence resource="EMBL-CDS" id="BAA13402"/>
    </conflict>
</comment>
<proteinExistence type="evidence at protein level"/>
<accession>Q92561</accession>
<accession>D3DSR1</accession>
<accession>Q8N4I9</accession>
<name>PHYIP_HUMAN</name>
<feature type="chain" id="PRO_0000058416" description="Phytanoyl-CoA hydroxylase-interacting protein">
    <location>
        <begin position="1"/>
        <end position="330"/>
    </location>
</feature>
<feature type="domain" description="Fibronectin type-III" evidence="2">
    <location>
        <begin position="6"/>
        <end position="115"/>
    </location>
</feature>
<feature type="glycosylation site" description="N-linked (GlcNAc...) asparagine" evidence="1">
    <location>
        <position position="14"/>
    </location>
</feature>
<feature type="glycosylation site" description="N-linked (GlcNAc...) asparagine" evidence="1">
    <location>
        <position position="325"/>
    </location>
</feature>
<feature type="sequence variant" id="VAR_018475" description="In dbSNP:rs11547660.">
    <original>R</original>
    <variation>S</variation>
    <location>
        <position position="21"/>
    </location>
</feature>
<feature type="sequence conflict" description="In Ref. 3; AAH34034/AAH35940." evidence="4" ref="3">
    <original>Q</original>
    <variation>E</variation>
    <location>
        <position position="150"/>
    </location>
</feature>
<feature type="sequence conflict" description="In Ref. 3; AAH34034/AAH35940." evidence="4" ref="3">
    <original>L</original>
    <variation>M</variation>
    <location>
        <position position="245"/>
    </location>
</feature>
<feature type="sequence conflict" description="In Ref. 3; AAH34034/AAH35940." evidence="4" ref="3">
    <original>L</original>
    <variation>R</variation>
    <location>
        <position position="254"/>
    </location>
</feature>
<keyword id="KW-0325">Glycoprotein</keyword>
<keyword id="KW-1267">Proteomics identification</keyword>
<keyword id="KW-1185">Reference proteome</keyword>
<sequence length="330" mass="37573">MELLSTPHSIEINNITCDSFRISWAMEDSDLERVTHYFIDLNKKENKNSNKFKHRDVPTKLVAKAVPLPMTVRGHWFLSPRTEYSVAVQTAVKQSDGEYLVSGWSETVEFCTGDYAKEHLAQLQEKAEQIAGRMLRFSVFYRNHHKEYFQHARTHCGNMLQPYLKDNSGSHGSPTSGMLHGVFFSCNTEFNTGQPPQDSPYGRWRFQIPAQRLFNPSTNLYFADFYCMYTAYHYAILVLAPKGSLGDRFCRDRLPLLDIACNKFLTCSVEDGELVFRHAQDLILEIIYTEPVDLSLGTLGEISGHQLMSLSTADAKKDPSCKTCNISVGR</sequence>
<gene>
    <name type="primary">PHYHIP</name>
    <name type="synonym">DYRK1AP3</name>
    <name type="synonym">KIAA0273</name>
</gene>
<organism>
    <name type="scientific">Homo sapiens</name>
    <name type="common">Human</name>
    <dbReference type="NCBI Taxonomy" id="9606"/>
    <lineage>
        <taxon>Eukaryota</taxon>
        <taxon>Metazoa</taxon>
        <taxon>Chordata</taxon>
        <taxon>Craniata</taxon>
        <taxon>Vertebrata</taxon>
        <taxon>Euteleostomi</taxon>
        <taxon>Mammalia</taxon>
        <taxon>Eutheria</taxon>
        <taxon>Euarchontoglires</taxon>
        <taxon>Primates</taxon>
        <taxon>Haplorrhini</taxon>
        <taxon>Catarrhini</taxon>
        <taxon>Hominidae</taxon>
        <taxon>Homo</taxon>
    </lineage>
</organism>
<evidence type="ECO:0000255" key="1"/>
<evidence type="ECO:0000255" key="2">
    <source>
        <dbReference type="PROSITE-ProRule" id="PRU00316"/>
    </source>
</evidence>
<evidence type="ECO:0000269" key="3">
    <source>
    </source>
</evidence>
<evidence type="ECO:0000305" key="4"/>